<reference key="1">
    <citation type="journal article" date="1994" name="J. Biol. Chem.">
        <title>Selective cloning of cDNA for secretory proteins of early embryos. Identification of a transiently expressed Kunitz domain protein from preimplantation sheep trophoblast.</title>
        <authorList>
            <person name="Kramer K.K."/>
            <person name="Duffy J.Y."/>
            <person name="Klemann S.W."/>
            <person name="Bixby J.A."/>
            <person name="Low B.G."/>
            <person name="Pope W.F."/>
            <person name="Roberts R.M."/>
        </authorList>
    </citation>
    <scope>NUCLEOTIDE SEQUENCE</scope>
    <source>
        <tissue>Conceptus membrane</tissue>
        <tissue>Uterus</tissue>
    </source>
</reference>
<feature type="signal peptide" evidence="1">
    <location>
        <begin position="1"/>
        <end position="20"/>
    </location>
</feature>
<feature type="chain" id="PRO_0000016880" description="Trophoblast Kunitz domain protein 1">
    <location>
        <begin position="21"/>
        <end position="265"/>
    </location>
</feature>
<feature type="repeat" description="1">
    <location>
        <begin position="32"/>
        <end position="115"/>
    </location>
</feature>
<feature type="repeat" description="2">
    <location>
        <begin position="117"/>
        <end position="200"/>
    </location>
</feature>
<feature type="domain" description="BPTI/Kunitz inhibitor" evidence="2">
    <location>
        <begin position="208"/>
        <end position="258"/>
    </location>
</feature>
<feature type="region of interest" description="2 X 84 AA approximate repeats">
    <location>
        <begin position="32"/>
        <end position="200"/>
    </location>
</feature>
<feature type="site" description="Reactive bond homolog" evidence="1">
    <location>
        <begin position="218"/>
        <end position="219"/>
    </location>
</feature>
<feature type="glycosylation site" description="N-linked (GlcNAc...) asparagine" evidence="1">
    <location>
        <position position="95"/>
    </location>
</feature>
<feature type="glycosylation site" description="N-linked (GlcNAc...) asparagine" evidence="1">
    <location>
        <position position="180"/>
    </location>
</feature>
<feature type="glycosylation site" description="N-linked (GlcNAc...) asparagine" evidence="1">
    <location>
        <position position="218"/>
    </location>
</feature>
<feature type="disulfide bond" evidence="2">
    <location>
        <begin position="208"/>
        <end position="258"/>
    </location>
</feature>
<feature type="disulfide bond" evidence="2">
    <location>
        <begin position="217"/>
        <end position="241"/>
    </location>
</feature>
<feature type="disulfide bond" evidence="2">
    <location>
        <begin position="233"/>
        <end position="254"/>
    </location>
</feature>
<dbReference type="EMBL" id="U00165">
    <property type="protein sequence ID" value="AAA19108.1"/>
    <property type="molecule type" value="Unassigned_DNA"/>
</dbReference>
<dbReference type="EMBL" id="L11343">
    <property type="protein sequence ID" value="AAB46361.1"/>
    <property type="molecule type" value="mRNA"/>
</dbReference>
<dbReference type="PIR" id="A53390">
    <property type="entry name" value="A53390"/>
</dbReference>
<dbReference type="RefSeq" id="NP_001009291.1">
    <property type="nucleotide sequence ID" value="NM_001009291.1"/>
</dbReference>
<dbReference type="SMR" id="Q29428"/>
<dbReference type="GlyCosmos" id="Q29428">
    <property type="glycosylation" value="3 sites, No reported glycans"/>
</dbReference>
<dbReference type="Ensembl" id="ENSOART00215054284">
    <property type="protein sequence ID" value="ENSOARP00215028552"/>
    <property type="gene ID" value="ENSOARG00215032364"/>
</dbReference>
<dbReference type="Ensembl" id="ENSOART00225058440">
    <property type="protein sequence ID" value="ENSOARP00225029073"/>
    <property type="gene ID" value="ENSOARG00225035416"/>
</dbReference>
<dbReference type="GeneID" id="443303"/>
<dbReference type="KEGG" id="oas:443303"/>
<dbReference type="CTD" id="404076"/>
<dbReference type="OrthoDB" id="4473401at2759"/>
<dbReference type="Proteomes" id="UP000002356">
    <property type="component" value="Unplaced"/>
</dbReference>
<dbReference type="GO" id="GO:0005615">
    <property type="term" value="C:extracellular space"/>
    <property type="evidence" value="ECO:0007669"/>
    <property type="project" value="TreeGrafter"/>
</dbReference>
<dbReference type="GO" id="GO:0004867">
    <property type="term" value="F:serine-type endopeptidase inhibitor activity"/>
    <property type="evidence" value="ECO:0007669"/>
    <property type="project" value="InterPro"/>
</dbReference>
<dbReference type="CDD" id="cd22609">
    <property type="entry name" value="Kunitz_TKDP-like"/>
    <property type="match status" value="1"/>
</dbReference>
<dbReference type="FunFam" id="4.10.410.10:FF:000005">
    <property type="entry name" value="Pancreatic trypsin inhibitor"/>
    <property type="match status" value="1"/>
</dbReference>
<dbReference type="Gene3D" id="4.10.410.10">
    <property type="entry name" value="Pancreatic trypsin inhibitor Kunitz domain"/>
    <property type="match status" value="1"/>
</dbReference>
<dbReference type="InterPro" id="IPR002223">
    <property type="entry name" value="Kunitz_BPTI"/>
</dbReference>
<dbReference type="InterPro" id="IPR036880">
    <property type="entry name" value="Kunitz_BPTI_sf"/>
</dbReference>
<dbReference type="InterPro" id="IPR020901">
    <property type="entry name" value="Prtase_inh_Kunz-CS"/>
</dbReference>
<dbReference type="InterPro" id="IPR050098">
    <property type="entry name" value="TFPI/VKTCI-like"/>
</dbReference>
<dbReference type="PANTHER" id="PTHR10083">
    <property type="entry name" value="KUNITZ-TYPE PROTEASE INHIBITOR-RELATED"/>
    <property type="match status" value="1"/>
</dbReference>
<dbReference type="PANTHER" id="PTHR10083:SF367">
    <property type="entry name" value="SPLEEN TRYPSIN INHIBITOR I"/>
    <property type="match status" value="1"/>
</dbReference>
<dbReference type="Pfam" id="PF00014">
    <property type="entry name" value="Kunitz_BPTI"/>
    <property type="match status" value="1"/>
</dbReference>
<dbReference type="PRINTS" id="PR00759">
    <property type="entry name" value="BASICPTASE"/>
</dbReference>
<dbReference type="SMART" id="SM00131">
    <property type="entry name" value="KU"/>
    <property type="match status" value="1"/>
</dbReference>
<dbReference type="SUPFAM" id="SSF57362">
    <property type="entry name" value="BPTI-like"/>
    <property type="match status" value="1"/>
</dbReference>
<dbReference type="PROSITE" id="PS00280">
    <property type="entry name" value="BPTI_KUNITZ_1"/>
    <property type="match status" value="1"/>
</dbReference>
<dbReference type="PROSITE" id="PS50279">
    <property type="entry name" value="BPTI_KUNITZ_2"/>
    <property type="match status" value="1"/>
</dbReference>
<protein>
    <recommendedName>
        <fullName>Trophoblast Kunitz domain protein 1</fullName>
        <shortName>TKDP-1</shortName>
    </recommendedName>
</protein>
<name>TKDP1_SHEEP</name>
<keyword id="KW-1015">Disulfide bond</keyword>
<keyword id="KW-0325">Glycoprotein</keyword>
<keyword id="KW-1185">Reference proteome</keyword>
<keyword id="KW-0677">Repeat</keyword>
<keyword id="KW-0964">Secreted</keyword>
<keyword id="KW-0732">Signal</keyword>
<proteinExistence type="evidence at transcript level"/>
<sequence length="265" mass="28964">MRQLCLSTALLFLLVILVDSTPLNIYHIQDEGLETSHRRGPEKRSVIDVVSGIINGVATGTKIIEKGAGILTGLAEIITKAIKGQVMISRIQFDNHTLEELPTLQLEYSTLSEENNGLKTSHRRGLEKRSVTDVVTSIINGVATGTKIIEKGAGILTGLAEIITKAIKGQVMISGIQFDNHTLEEYQTLKIEYSTLSEENKASKPALCLEPKVTGDCNATMTRYFYNTQTGLCEQFVYTGCEGNGNNFENLEDCMKTCSQEAGSL</sequence>
<comment type="function">
    <text>May play a role in mediating maternal-conceptus interactions in the immediate preimplantation period. Does not seem to have proteinase inhibitory activity.</text>
</comment>
<comment type="subcellular location">
    <subcellularLocation>
        <location>Secreted</location>
    </subcellularLocation>
</comment>
<comment type="tissue specificity">
    <text>Expressed only in the trophectoderm, which forms the outer epithelial layer of the trophoblast.</text>
</comment>
<comment type="developmental stage">
    <text>Maximal expression at days 14 and 16 of pregnancy.</text>
</comment>
<gene>
    <name type="primary">TKDP1</name>
</gene>
<evidence type="ECO:0000255" key="1"/>
<evidence type="ECO:0000255" key="2">
    <source>
        <dbReference type="PROSITE-ProRule" id="PRU00031"/>
    </source>
</evidence>
<organism>
    <name type="scientific">Ovis aries</name>
    <name type="common">Sheep</name>
    <dbReference type="NCBI Taxonomy" id="9940"/>
    <lineage>
        <taxon>Eukaryota</taxon>
        <taxon>Metazoa</taxon>
        <taxon>Chordata</taxon>
        <taxon>Craniata</taxon>
        <taxon>Vertebrata</taxon>
        <taxon>Euteleostomi</taxon>
        <taxon>Mammalia</taxon>
        <taxon>Eutheria</taxon>
        <taxon>Laurasiatheria</taxon>
        <taxon>Artiodactyla</taxon>
        <taxon>Ruminantia</taxon>
        <taxon>Pecora</taxon>
        <taxon>Bovidae</taxon>
        <taxon>Caprinae</taxon>
        <taxon>Ovis</taxon>
    </lineage>
</organism>
<accession>Q29428</accession>